<accession>O13493</accession>
<accession>Q1K7V6</accession>
<accession>Q9HEF2</accession>
<feature type="chain" id="PRO_0000197086" description="Myb-like DNA-binding protein myb-1">
    <location>
        <begin position="1"/>
        <end position="324"/>
    </location>
</feature>
<feature type="domain" description="HTH myb-type 1" evidence="1">
    <location>
        <begin position="4"/>
        <end position="59"/>
    </location>
</feature>
<feature type="domain" description="HTH myb-type 2" evidence="1">
    <location>
        <begin position="60"/>
        <end position="110"/>
    </location>
</feature>
<feature type="region of interest" description="Disordered" evidence="2">
    <location>
        <begin position="107"/>
        <end position="231"/>
    </location>
</feature>
<feature type="compositionally biased region" description="Polar residues" evidence="2">
    <location>
        <begin position="155"/>
        <end position="165"/>
    </location>
</feature>
<feature type="compositionally biased region" description="Basic and acidic residues" evidence="2">
    <location>
        <begin position="166"/>
        <end position="175"/>
    </location>
</feature>
<feature type="compositionally biased region" description="Low complexity" evidence="2">
    <location>
        <begin position="183"/>
        <end position="192"/>
    </location>
</feature>
<feature type="compositionally biased region" description="Low complexity" evidence="2">
    <location>
        <begin position="222"/>
        <end position="231"/>
    </location>
</feature>
<dbReference type="EMBL" id="AF006202">
    <property type="protein sequence ID" value="AAB62897.1"/>
    <property type="status" value="ALT_FRAME"/>
    <property type="molecule type" value="Genomic_DNA"/>
</dbReference>
<dbReference type="EMBL" id="AL451021">
    <property type="protein sequence ID" value="CAC18298.1"/>
    <property type="molecule type" value="Genomic_DNA"/>
</dbReference>
<dbReference type="EMBL" id="CM002240">
    <property type="protein sequence ID" value="EAA32162.1"/>
    <property type="molecule type" value="Genomic_DNA"/>
</dbReference>
<dbReference type="PIR" id="T47227">
    <property type="entry name" value="T47227"/>
</dbReference>
<dbReference type="RefSeq" id="XP_961398.1">
    <property type="nucleotide sequence ID" value="XM_956305.3"/>
</dbReference>
<dbReference type="SMR" id="O13493"/>
<dbReference type="STRING" id="367110.O13493"/>
<dbReference type="PaxDb" id="5141-EFNCRP00000004118"/>
<dbReference type="EnsemblFungi" id="EAA32162">
    <property type="protein sequence ID" value="EAA32162"/>
    <property type="gene ID" value="NCU01312"/>
</dbReference>
<dbReference type="GeneID" id="3877542"/>
<dbReference type="KEGG" id="ncr:NCU01312"/>
<dbReference type="VEuPathDB" id="FungiDB:NCU01312"/>
<dbReference type="HOGENOM" id="CLU_046302_0_0_1"/>
<dbReference type="InParanoid" id="O13493"/>
<dbReference type="OMA" id="QPMNIPF"/>
<dbReference type="OrthoDB" id="2143914at2759"/>
<dbReference type="Proteomes" id="UP000001805">
    <property type="component" value="Chromosome 2, Linkage Group V"/>
</dbReference>
<dbReference type="GO" id="GO:0005634">
    <property type="term" value="C:nucleus"/>
    <property type="evidence" value="ECO:0000318"/>
    <property type="project" value="GO_Central"/>
</dbReference>
<dbReference type="GO" id="GO:0000981">
    <property type="term" value="F:DNA-binding transcription factor activity, RNA polymerase II-specific"/>
    <property type="evidence" value="ECO:0000318"/>
    <property type="project" value="GO_Central"/>
</dbReference>
<dbReference type="GO" id="GO:0000978">
    <property type="term" value="F:RNA polymerase II cis-regulatory region sequence-specific DNA binding"/>
    <property type="evidence" value="ECO:0000318"/>
    <property type="project" value="GO_Central"/>
</dbReference>
<dbReference type="GO" id="GO:0000278">
    <property type="term" value="P:mitotic cell cycle"/>
    <property type="evidence" value="ECO:0000318"/>
    <property type="project" value="GO_Central"/>
</dbReference>
<dbReference type="GO" id="GO:0045944">
    <property type="term" value="P:positive regulation of transcription by RNA polymerase II"/>
    <property type="evidence" value="ECO:0000318"/>
    <property type="project" value="GO_Central"/>
</dbReference>
<dbReference type="CDD" id="cd00167">
    <property type="entry name" value="SANT"/>
    <property type="match status" value="2"/>
</dbReference>
<dbReference type="FunFam" id="1.10.10.60:FF:000355">
    <property type="entry name" value="Transcription factor MYB124"/>
    <property type="match status" value="1"/>
</dbReference>
<dbReference type="Gene3D" id="1.10.10.60">
    <property type="entry name" value="Homeodomain-like"/>
    <property type="match status" value="2"/>
</dbReference>
<dbReference type="InterPro" id="IPR009057">
    <property type="entry name" value="Homeodomain-like_sf"/>
</dbReference>
<dbReference type="InterPro" id="IPR017930">
    <property type="entry name" value="Myb_dom"/>
</dbReference>
<dbReference type="InterPro" id="IPR050560">
    <property type="entry name" value="MYB_TF"/>
</dbReference>
<dbReference type="InterPro" id="IPR001005">
    <property type="entry name" value="SANT/Myb"/>
</dbReference>
<dbReference type="PANTHER" id="PTHR45614:SF25">
    <property type="entry name" value="MYB PROTEIN"/>
    <property type="match status" value="1"/>
</dbReference>
<dbReference type="PANTHER" id="PTHR45614">
    <property type="entry name" value="MYB PROTEIN-RELATED"/>
    <property type="match status" value="1"/>
</dbReference>
<dbReference type="Pfam" id="PF00249">
    <property type="entry name" value="Myb_DNA-binding"/>
    <property type="match status" value="2"/>
</dbReference>
<dbReference type="SMART" id="SM00717">
    <property type="entry name" value="SANT"/>
    <property type="match status" value="2"/>
</dbReference>
<dbReference type="SUPFAM" id="SSF46689">
    <property type="entry name" value="Homeodomain-like"/>
    <property type="match status" value="1"/>
</dbReference>
<dbReference type="PROSITE" id="PS51294">
    <property type="entry name" value="HTH_MYB"/>
    <property type="match status" value="2"/>
</dbReference>
<protein>
    <recommendedName>
        <fullName>Myb-like DNA-binding protein myb-1</fullName>
    </recommendedName>
</protein>
<proteinExistence type="inferred from homology"/>
<evidence type="ECO:0000255" key="1">
    <source>
        <dbReference type="PROSITE-ProRule" id="PRU00625"/>
    </source>
</evidence>
<evidence type="ECO:0000256" key="2">
    <source>
        <dbReference type="SAM" id="MobiDB-lite"/>
    </source>
</evidence>
<evidence type="ECO:0000305" key="3"/>
<comment type="subcellular location">
    <subcellularLocation>
        <location evidence="1">Nucleus</location>
    </subcellularLocation>
</comment>
<comment type="sequence caution" evidence="3">
    <conflict type="frameshift">
        <sequence resource="EMBL-CDS" id="AAB62897"/>
    </conflict>
</comment>
<keyword id="KW-0238">DNA-binding</keyword>
<keyword id="KW-0539">Nucleus</keyword>
<keyword id="KW-1185">Reference proteome</keyword>
<keyword id="KW-0677">Repeat</keyword>
<reference key="1">
    <citation type="journal article" date="1998" name="Genetics">
        <title>The Neurospora rca-1 gene complements an Aspergillus flbD sporulation mutant but has no identifiable role in Neurospora sporulation.</title>
        <authorList>
            <person name="Shen W.-C."/>
            <person name="Wieser J."/>
            <person name="Adams T.H."/>
            <person name="Ebbole D.J."/>
        </authorList>
    </citation>
    <scope>NUCLEOTIDE SEQUENCE [GENOMIC DNA / MRNA]</scope>
</reference>
<reference key="2">
    <citation type="journal article" date="2003" name="Nucleic Acids Res.">
        <title>What's in the genome of a filamentous fungus? Analysis of the Neurospora genome sequence.</title>
        <authorList>
            <person name="Mannhaupt G."/>
            <person name="Montrone C."/>
            <person name="Haase D."/>
            <person name="Mewes H.-W."/>
            <person name="Aign V."/>
            <person name="Hoheisel J.D."/>
            <person name="Fartmann B."/>
            <person name="Nyakatura G."/>
            <person name="Kempken F."/>
            <person name="Maier J."/>
            <person name="Schulte U."/>
        </authorList>
    </citation>
    <scope>NUCLEOTIDE SEQUENCE [LARGE SCALE GENOMIC DNA]</scope>
    <source>
        <strain>ATCC 24698 / 74-OR23-1A / CBS 708.71 / DSM 1257 / FGSC 987</strain>
    </source>
</reference>
<reference key="3">
    <citation type="journal article" date="2003" name="Nature">
        <title>The genome sequence of the filamentous fungus Neurospora crassa.</title>
        <authorList>
            <person name="Galagan J.E."/>
            <person name="Calvo S.E."/>
            <person name="Borkovich K.A."/>
            <person name="Selker E.U."/>
            <person name="Read N.D."/>
            <person name="Jaffe D.B."/>
            <person name="FitzHugh W."/>
            <person name="Ma L.-J."/>
            <person name="Smirnov S."/>
            <person name="Purcell S."/>
            <person name="Rehman B."/>
            <person name="Elkins T."/>
            <person name="Engels R."/>
            <person name="Wang S."/>
            <person name="Nielsen C.B."/>
            <person name="Butler J."/>
            <person name="Endrizzi M."/>
            <person name="Qui D."/>
            <person name="Ianakiev P."/>
            <person name="Bell-Pedersen D."/>
            <person name="Nelson M.A."/>
            <person name="Werner-Washburne M."/>
            <person name="Selitrennikoff C.P."/>
            <person name="Kinsey J.A."/>
            <person name="Braun E.L."/>
            <person name="Zelter A."/>
            <person name="Schulte U."/>
            <person name="Kothe G.O."/>
            <person name="Jedd G."/>
            <person name="Mewes H.-W."/>
            <person name="Staben C."/>
            <person name="Marcotte E."/>
            <person name="Greenberg D."/>
            <person name="Roy A."/>
            <person name="Foley K."/>
            <person name="Naylor J."/>
            <person name="Stange-Thomann N."/>
            <person name="Barrett R."/>
            <person name="Gnerre S."/>
            <person name="Kamal M."/>
            <person name="Kamvysselis M."/>
            <person name="Mauceli E.W."/>
            <person name="Bielke C."/>
            <person name="Rudd S."/>
            <person name="Frishman D."/>
            <person name="Krystofova S."/>
            <person name="Rasmussen C."/>
            <person name="Metzenberg R.L."/>
            <person name="Perkins D.D."/>
            <person name="Kroken S."/>
            <person name="Cogoni C."/>
            <person name="Macino G."/>
            <person name="Catcheside D.E.A."/>
            <person name="Li W."/>
            <person name="Pratt R.J."/>
            <person name="Osmani S.A."/>
            <person name="DeSouza C.P.C."/>
            <person name="Glass N.L."/>
            <person name="Orbach M.J."/>
            <person name="Berglund J.A."/>
            <person name="Voelker R."/>
            <person name="Yarden O."/>
            <person name="Plamann M."/>
            <person name="Seiler S."/>
            <person name="Dunlap J.C."/>
            <person name="Radford A."/>
            <person name="Aramayo R."/>
            <person name="Natvig D.O."/>
            <person name="Alex L.A."/>
            <person name="Mannhaupt G."/>
            <person name="Ebbole D.J."/>
            <person name="Freitag M."/>
            <person name="Paulsen I."/>
            <person name="Sachs M.S."/>
            <person name="Lander E.S."/>
            <person name="Nusbaum C."/>
            <person name="Birren B.W."/>
        </authorList>
    </citation>
    <scope>NUCLEOTIDE SEQUENCE [LARGE SCALE GENOMIC DNA]</scope>
    <source>
        <strain>ATCC 24698 / 74-OR23-1A / CBS 708.71 / DSM 1257 / FGSC 987</strain>
    </source>
</reference>
<name>MYB1_NEUCR</name>
<organism>
    <name type="scientific">Neurospora crassa (strain ATCC 24698 / 74-OR23-1A / CBS 708.71 / DSM 1257 / FGSC 987)</name>
    <dbReference type="NCBI Taxonomy" id="367110"/>
    <lineage>
        <taxon>Eukaryota</taxon>
        <taxon>Fungi</taxon>
        <taxon>Dikarya</taxon>
        <taxon>Ascomycota</taxon>
        <taxon>Pezizomycotina</taxon>
        <taxon>Sordariomycetes</taxon>
        <taxon>Sordariomycetidae</taxon>
        <taxon>Sordariales</taxon>
        <taxon>Sordariaceae</taxon>
        <taxon>Neurospora</taxon>
    </lineage>
</organism>
<gene>
    <name type="primary">rca-1</name>
    <name type="synonym">myb-1</name>
    <name type="ORF">65E11.140</name>
    <name type="ORF">NCU01312</name>
</gene>
<sequence>MSNMPDQRRGPWSAGEDQRLIKLVKDLGPGNWVNVARILGTRTPKQCRERWHQNLKPGLNHGPMTQEEAAIIVREVDLKGPRWADIARKLQGRSDNAVKNYWNGLNNRKKNQLRRQSAPRRVSASDVLRSSPGQLPRAHMQRPIRYPQDIYTGSRRPSSPSSFNDSLHHRVHESIEWFPSRPQQQQQQQQQQARCTTPFTSFYPPSHAFPTTDGYQDGSDGPTGSTLRLLTPPTSRRLAPFSTLPSPTTSSIGDLDEFDRRQLAAFAPPAAYRRPSLPFPQQSSMGYLPSATEYLPTAPSSPIALIQRDEKNHARIPVTSLLCS</sequence>